<organism>
    <name type="scientific">Flavobacterium psychrophilum (strain ATCC 49511 / DSM 21280 / CIP 103535 / JIP02/86)</name>
    <dbReference type="NCBI Taxonomy" id="402612"/>
    <lineage>
        <taxon>Bacteria</taxon>
        <taxon>Pseudomonadati</taxon>
        <taxon>Bacteroidota</taxon>
        <taxon>Flavobacteriia</taxon>
        <taxon>Flavobacteriales</taxon>
        <taxon>Flavobacteriaceae</taxon>
        <taxon>Flavobacterium</taxon>
    </lineage>
</organism>
<accession>A6H239</accession>
<gene>
    <name evidence="1" type="primary">uppP</name>
    <name type="ordered locus">FP2358</name>
</gene>
<comment type="function">
    <text evidence="1">Catalyzes the dephosphorylation of undecaprenyl diphosphate (UPP). Confers resistance to bacitracin.</text>
</comment>
<comment type="catalytic activity">
    <reaction evidence="1">
        <text>di-trans,octa-cis-undecaprenyl diphosphate + H2O = di-trans,octa-cis-undecaprenyl phosphate + phosphate + H(+)</text>
        <dbReference type="Rhea" id="RHEA:28094"/>
        <dbReference type="ChEBI" id="CHEBI:15377"/>
        <dbReference type="ChEBI" id="CHEBI:15378"/>
        <dbReference type="ChEBI" id="CHEBI:43474"/>
        <dbReference type="ChEBI" id="CHEBI:58405"/>
        <dbReference type="ChEBI" id="CHEBI:60392"/>
        <dbReference type="EC" id="3.6.1.27"/>
    </reaction>
</comment>
<comment type="subcellular location">
    <subcellularLocation>
        <location evidence="1">Cell inner membrane</location>
        <topology evidence="1">Multi-pass membrane protein</topology>
    </subcellularLocation>
</comment>
<comment type="miscellaneous">
    <text>Bacitracin is thought to be involved in the inhibition of peptidoglycan synthesis by sequestering undecaprenyl diphosphate, thereby reducing the pool of lipid carrier available.</text>
</comment>
<comment type="similarity">
    <text evidence="1">Belongs to the UppP family.</text>
</comment>
<feature type="chain" id="PRO_0000303027" description="Undecaprenyl-diphosphatase">
    <location>
        <begin position="1"/>
        <end position="261"/>
    </location>
</feature>
<feature type="transmembrane region" description="Helical" evidence="1">
    <location>
        <begin position="1"/>
        <end position="21"/>
    </location>
</feature>
<feature type="transmembrane region" description="Helical" evidence="1">
    <location>
        <begin position="41"/>
        <end position="61"/>
    </location>
</feature>
<feature type="transmembrane region" description="Helical" evidence="1">
    <location>
        <begin position="69"/>
        <end position="89"/>
    </location>
</feature>
<feature type="transmembrane region" description="Helical" evidence="1">
    <location>
        <begin position="95"/>
        <end position="115"/>
    </location>
</feature>
<feature type="transmembrane region" description="Helical" evidence="1">
    <location>
        <begin position="129"/>
        <end position="149"/>
    </location>
</feature>
<feature type="transmembrane region" description="Helical" evidence="1">
    <location>
        <begin position="169"/>
        <end position="186"/>
    </location>
</feature>
<feature type="transmembrane region" description="Helical" evidence="1">
    <location>
        <begin position="206"/>
        <end position="226"/>
    </location>
</feature>
<feature type="transmembrane region" description="Helical" evidence="1">
    <location>
        <begin position="241"/>
        <end position="261"/>
    </location>
</feature>
<name>UPPP_FLAPJ</name>
<proteinExistence type="inferred from homology"/>
<evidence type="ECO:0000255" key="1">
    <source>
        <dbReference type="HAMAP-Rule" id="MF_01006"/>
    </source>
</evidence>
<keyword id="KW-0046">Antibiotic resistance</keyword>
<keyword id="KW-0997">Cell inner membrane</keyword>
<keyword id="KW-1003">Cell membrane</keyword>
<keyword id="KW-0133">Cell shape</keyword>
<keyword id="KW-0961">Cell wall biogenesis/degradation</keyword>
<keyword id="KW-0378">Hydrolase</keyword>
<keyword id="KW-0472">Membrane</keyword>
<keyword id="KW-0573">Peptidoglycan synthesis</keyword>
<keyword id="KW-1185">Reference proteome</keyword>
<keyword id="KW-0812">Transmembrane</keyword>
<keyword id="KW-1133">Transmembrane helix</keyword>
<sequence length="261" mass="28818">MNYIQAIILAIIEGITEFLPVSSTGHMIIASSFFGIAHEDFTKLFTIVIQLGAILSVVVLYFKRFFQTLDFYFKLLVAFIPAVVLGLLFSKKIDALLESPVTVAVSLLVGGIILLKVDDWFNNSSETEITYLKAFKIGLFQCIAMIPGVSRSGASIVGGMSQKLARTSAAEFSFFLAVPTMLGATLKKCYDYYKDGFILTHDQINILIIGNIVAFLVALLAIKTFIGFLSKNGFKVFGYYRIVAGIVLLLIHFFIHPLTLI</sequence>
<protein>
    <recommendedName>
        <fullName evidence="1">Undecaprenyl-diphosphatase</fullName>
        <ecNumber evidence="1">3.6.1.27</ecNumber>
    </recommendedName>
    <alternativeName>
        <fullName evidence="1">Bacitracin resistance protein</fullName>
    </alternativeName>
    <alternativeName>
        <fullName evidence="1">Undecaprenyl pyrophosphate phosphatase</fullName>
    </alternativeName>
</protein>
<reference key="1">
    <citation type="journal article" date="2007" name="Nat. Biotechnol.">
        <title>Complete genome sequence of the fish pathogen Flavobacterium psychrophilum.</title>
        <authorList>
            <person name="Duchaud E."/>
            <person name="Boussaha M."/>
            <person name="Loux V."/>
            <person name="Bernardet J.-F."/>
            <person name="Michel C."/>
            <person name="Kerouault B."/>
            <person name="Mondot S."/>
            <person name="Nicolas P."/>
            <person name="Bossy R."/>
            <person name="Caron C."/>
            <person name="Bessieres P."/>
            <person name="Gibrat J.-F."/>
            <person name="Claverol S."/>
            <person name="Dumetz F."/>
            <person name="Le Henaff M."/>
            <person name="Benmansour A."/>
        </authorList>
    </citation>
    <scope>NUCLEOTIDE SEQUENCE [LARGE SCALE GENOMIC DNA]</scope>
    <source>
        <strain>ATCC 49511 / DSM 21280 / CIP 103535 / JIP02/86</strain>
    </source>
</reference>
<dbReference type="EC" id="3.6.1.27" evidence="1"/>
<dbReference type="EMBL" id="AM398681">
    <property type="protein sequence ID" value="CAL44413.1"/>
    <property type="molecule type" value="Genomic_DNA"/>
</dbReference>
<dbReference type="RefSeq" id="WP_011964447.1">
    <property type="nucleotide sequence ID" value="NC_009613.3"/>
</dbReference>
<dbReference type="RefSeq" id="YP_001297214.1">
    <property type="nucleotide sequence ID" value="NC_009613.3"/>
</dbReference>
<dbReference type="SMR" id="A6H239"/>
<dbReference type="STRING" id="402612.FP2358"/>
<dbReference type="EnsemblBacteria" id="CAL44413">
    <property type="protein sequence ID" value="CAL44413"/>
    <property type="gene ID" value="FP2358"/>
</dbReference>
<dbReference type="KEGG" id="fps:FP2358"/>
<dbReference type="PATRIC" id="fig|402612.5.peg.2414"/>
<dbReference type="eggNOG" id="COG1968">
    <property type="taxonomic scope" value="Bacteria"/>
</dbReference>
<dbReference type="HOGENOM" id="CLU_060296_2_0_10"/>
<dbReference type="OrthoDB" id="9808289at2"/>
<dbReference type="Proteomes" id="UP000006394">
    <property type="component" value="Chromosome"/>
</dbReference>
<dbReference type="GO" id="GO:0005886">
    <property type="term" value="C:plasma membrane"/>
    <property type="evidence" value="ECO:0007669"/>
    <property type="project" value="UniProtKB-SubCell"/>
</dbReference>
<dbReference type="GO" id="GO:0050380">
    <property type="term" value="F:undecaprenyl-diphosphatase activity"/>
    <property type="evidence" value="ECO:0007669"/>
    <property type="project" value="UniProtKB-UniRule"/>
</dbReference>
<dbReference type="GO" id="GO:0071555">
    <property type="term" value="P:cell wall organization"/>
    <property type="evidence" value="ECO:0007669"/>
    <property type="project" value="UniProtKB-KW"/>
</dbReference>
<dbReference type="GO" id="GO:0009252">
    <property type="term" value="P:peptidoglycan biosynthetic process"/>
    <property type="evidence" value="ECO:0007669"/>
    <property type="project" value="UniProtKB-KW"/>
</dbReference>
<dbReference type="GO" id="GO:0008360">
    <property type="term" value="P:regulation of cell shape"/>
    <property type="evidence" value="ECO:0007669"/>
    <property type="project" value="UniProtKB-KW"/>
</dbReference>
<dbReference type="GO" id="GO:0046677">
    <property type="term" value="P:response to antibiotic"/>
    <property type="evidence" value="ECO:0007669"/>
    <property type="project" value="UniProtKB-UniRule"/>
</dbReference>
<dbReference type="HAMAP" id="MF_01006">
    <property type="entry name" value="Undec_diphosphatase"/>
    <property type="match status" value="1"/>
</dbReference>
<dbReference type="InterPro" id="IPR003824">
    <property type="entry name" value="UppP"/>
</dbReference>
<dbReference type="NCBIfam" id="NF001389">
    <property type="entry name" value="PRK00281.1-2"/>
    <property type="match status" value="1"/>
</dbReference>
<dbReference type="NCBIfam" id="NF001390">
    <property type="entry name" value="PRK00281.1-4"/>
    <property type="match status" value="1"/>
</dbReference>
<dbReference type="NCBIfam" id="TIGR00753">
    <property type="entry name" value="undec_PP_bacA"/>
    <property type="match status" value="1"/>
</dbReference>
<dbReference type="PANTHER" id="PTHR30622">
    <property type="entry name" value="UNDECAPRENYL-DIPHOSPHATASE"/>
    <property type="match status" value="1"/>
</dbReference>
<dbReference type="PANTHER" id="PTHR30622:SF3">
    <property type="entry name" value="UNDECAPRENYL-DIPHOSPHATASE"/>
    <property type="match status" value="1"/>
</dbReference>
<dbReference type="Pfam" id="PF02673">
    <property type="entry name" value="BacA"/>
    <property type="match status" value="1"/>
</dbReference>